<proteinExistence type="inferred from homology"/>
<organism>
    <name type="scientific">Burkholderia mallei (strain ATCC 23344)</name>
    <dbReference type="NCBI Taxonomy" id="243160"/>
    <lineage>
        <taxon>Bacteria</taxon>
        <taxon>Pseudomonadati</taxon>
        <taxon>Pseudomonadota</taxon>
        <taxon>Betaproteobacteria</taxon>
        <taxon>Burkholderiales</taxon>
        <taxon>Burkholderiaceae</taxon>
        <taxon>Burkholderia</taxon>
        <taxon>pseudomallei group</taxon>
    </lineage>
</organism>
<gene>
    <name type="primary">rpsU2</name>
    <name type="synonym">rpsU-2</name>
    <name type="ordered locus">BMAA0336</name>
</gene>
<dbReference type="EMBL" id="CP000011">
    <property type="protein sequence ID" value="AAU45977.1"/>
    <property type="molecule type" value="Genomic_DNA"/>
</dbReference>
<dbReference type="RefSeq" id="YP_105143.1">
    <property type="nucleotide sequence ID" value="NC_006349.2"/>
</dbReference>
<dbReference type="SMR" id="Q62DT5"/>
<dbReference type="KEGG" id="bma:BMAA0336"/>
<dbReference type="PATRIC" id="fig|243160.12.peg.3831"/>
<dbReference type="eggNOG" id="COG0828">
    <property type="taxonomic scope" value="Bacteria"/>
</dbReference>
<dbReference type="HOGENOM" id="CLU_159258_1_2_4"/>
<dbReference type="PRO" id="PR:Q62DT5"/>
<dbReference type="Proteomes" id="UP000006693">
    <property type="component" value="Chromosome 2"/>
</dbReference>
<dbReference type="GO" id="GO:1990904">
    <property type="term" value="C:ribonucleoprotein complex"/>
    <property type="evidence" value="ECO:0007669"/>
    <property type="project" value="UniProtKB-KW"/>
</dbReference>
<dbReference type="GO" id="GO:0005840">
    <property type="term" value="C:ribosome"/>
    <property type="evidence" value="ECO:0007669"/>
    <property type="project" value="UniProtKB-KW"/>
</dbReference>
<dbReference type="GO" id="GO:0003735">
    <property type="term" value="F:structural constituent of ribosome"/>
    <property type="evidence" value="ECO:0007669"/>
    <property type="project" value="InterPro"/>
</dbReference>
<dbReference type="GO" id="GO:0006412">
    <property type="term" value="P:translation"/>
    <property type="evidence" value="ECO:0007669"/>
    <property type="project" value="UniProtKB-UniRule"/>
</dbReference>
<dbReference type="Gene3D" id="1.20.5.1150">
    <property type="entry name" value="Ribosomal protein S8"/>
    <property type="match status" value="1"/>
</dbReference>
<dbReference type="HAMAP" id="MF_00358">
    <property type="entry name" value="Ribosomal_bS21"/>
    <property type="match status" value="1"/>
</dbReference>
<dbReference type="InterPro" id="IPR001911">
    <property type="entry name" value="Ribosomal_bS21"/>
</dbReference>
<dbReference type="InterPro" id="IPR038380">
    <property type="entry name" value="Ribosomal_bS21_sf"/>
</dbReference>
<dbReference type="NCBIfam" id="TIGR00030">
    <property type="entry name" value="S21p"/>
    <property type="match status" value="1"/>
</dbReference>
<dbReference type="PANTHER" id="PTHR21109">
    <property type="entry name" value="MITOCHONDRIAL 28S RIBOSOMAL PROTEIN S21"/>
    <property type="match status" value="1"/>
</dbReference>
<dbReference type="PANTHER" id="PTHR21109:SF22">
    <property type="entry name" value="SMALL RIBOSOMAL SUBUNIT PROTEIN BS21"/>
    <property type="match status" value="1"/>
</dbReference>
<dbReference type="Pfam" id="PF01165">
    <property type="entry name" value="Ribosomal_S21"/>
    <property type="match status" value="1"/>
</dbReference>
<dbReference type="PRINTS" id="PR00976">
    <property type="entry name" value="RIBOSOMALS21"/>
</dbReference>
<comment type="similarity">
    <text evidence="2">Belongs to the bacterial ribosomal protein bS21 family.</text>
</comment>
<keyword id="KW-1185">Reference proteome</keyword>
<keyword id="KW-0687">Ribonucleoprotein</keyword>
<keyword id="KW-0689">Ribosomal protein</keyword>
<name>RS21B_BURMA</name>
<sequence length="70" mass="8579">MTIIRVKENEPFEVAMRRFKRTIEKNGLLTELRAREFYEKPTAERKRKKAAAVKRHYKRIRSQMLPKKLY</sequence>
<accession>Q62DT5</accession>
<reference key="1">
    <citation type="journal article" date="2004" name="Proc. Natl. Acad. Sci. U.S.A.">
        <title>Structural flexibility in the Burkholderia mallei genome.</title>
        <authorList>
            <person name="Nierman W.C."/>
            <person name="DeShazer D."/>
            <person name="Kim H.S."/>
            <person name="Tettelin H."/>
            <person name="Nelson K.E."/>
            <person name="Feldblyum T.V."/>
            <person name="Ulrich R.L."/>
            <person name="Ronning C.M."/>
            <person name="Brinkac L.M."/>
            <person name="Daugherty S.C."/>
            <person name="Davidsen T.D."/>
            <person name="DeBoy R.T."/>
            <person name="Dimitrov G."/>
            <person name="Dodson R.J."/>
            <person name="Durkin A.S."/>
            <person name="Gwinn M.L."/>
            <person name="Haft D.H."/>
            <person name="Khouri H.M."/>
            <person name="Kolonay J.F."/>
            <person name="Madupu R."/>
            <person name="Mohammoud Y."/>
            <person name="Nelson W.C."/>
            <person name="Radune D."/>
            <person name="Romero C.M."/>
            <person name="Sarria S."/>
            <person name="Selengut J."/>
            <person name="Shamblin C."/>
            <person name="Sullivan S.A."/>
            <person name="White O."/>
            <person name="Yu Y."/>
            <person name="Zafar N."/>
            <person name="Zhou L."/>
            <person name="Fraser C.M."/>
        </authorList>
    </citation>
    <scope>NUCLEOTIDE SEQUENCE [LARGE SCALE GENOMIC DNA]</scope>
    <source>
        <strain>ATCC 23344</strain>
    </source>
</reference>
<evidence type="ECO:0000255" key="1">
    <source>
        <dbReference type="HAMAP-Rule" id="MF_00358"/>
    </source>
</evidence>
<evidence type="ECO:0000305" key="2"/>
<feature type="chain" id="PRO_0000178316" description="Small ribosomal subunit protein bS21B">
    <location>
        <begin position="1"/>
        <end position="70"/>
    </location>
</feature>
<protein>
    <recommendedName>
        <fullName evidence="1">Small ribosomal subunit protein bS21B</fullName>
    </recommendedName>
    <alternativeName>
        <fullName evidence="2">30S ribosomal protein S21 2</fullName>
    </alternativeName>
</protein>